<dbReference type="EMBL" id="AY863212">
    <property type="protein sequence ID" value="AAW49478.1"/>
    <property type="molecule type" value="Genomic_DNA"/>
</dbReference>
<dbReference type="RefSeq" id="YP_203311.1">
    <property type="nucleotide sequence ID" value="NC_006836.1"/>
</dbReference>
<dbReference type="SMR" id="Q3T4E5"/>
<dbReference type="GeneID" id="3260161"/>
<dbReference type="GO" id="GO:0031966">
    <property type="term" value="C:mitochondrial membrane"/>
    <property type="evidence" value="ECO:0007669"/>
    <property type="project" value="UniProtKB-SubCell"/>
</dbReference>
<dbReference type="GO" id="GO:0045259">
    <property type="term" value="C:proton-transporting ATP synthase complex"/>
    <property type="evidence" value="ECO:0007669"/>
    <property type="project" value="UniProtKB-KW"/>
</dbReference>
<dbReference type="GO" id="GO:0033177">
    <property type="term" value="C:proton-transporting two-sector ATPase complex, proton-transporting domain"/>
    <property type="evidence" value="ECO:0007669"/>
    <property type="project" value="InterPro"/>
</dbReference>
<dbReference type="GO" id="GO:0008289">
    <property type="term" value="F:lipid binding"/>
    <property type="evidence" value="ECO:0007669"/>
    <property type="project" value="UniProtKB-KW"/>
</dbReference>
<dbReference type="GO" id="GO:0015078">
    <property type="term" value="F:proton transmembrane transporter activity"/>
    <property type="evidence" value="ECO:0007669"/>
    <property type="project" value="InterPro"/>
</dbReference>
<dbReference type="GO" id="GO:0015986">
    <property type="term" value="P:proton motive force-driven ATP synthesis"/>
    <property type="evidence" value="ECO:0007669"/>
    <property type="project" value="InterPro"/>
</dbReference>
<dbReference type="CDD" id="cd18182">
    <property type="entry name" value="ATP-synt_Fo_c_ATP5G3"/>
    <property type="match status" value="1"/>
</dbReference>
<dbReference type="FunFam" id="1.20.20.10:FF:000003">
    <property type="entry name" value="Atp synthase f complex subunit mitochondrial"/>
    <property type="match status" value="1"/>
</dbReference>
<dbReference type="Gene3D" id="1.20.20.10">
    <property type="entry name" value="F1F0 ATP synthase subunit C"/>
    <property type="match status" value="1"/>
</dbReference>
<dbReference type="HAMAP" id="MF_01396">
    <property type="entry name" value="ATP_synth_c_bact"/>
    <property type="match status" value="1"/>
</dbReference>
<dbReference type="InterPro" id="IPR000454">
    <property type="entry name" value="ATP_synth_F0_csu"/>
</dbReference>
<dbReference type="InterPro" id="IPR020537">
    <property type="entry name" value="ATP_synth_F0_csu_DDCD_BS"/>
</dbReference>
<dbReference type="InterPro" id="IPR038662">
    <property type="entry name" value="ATP_synth_F0_csu_sf"/>
</dbReference>
<dbReference type="InterPro" id="IPR002379">
    <property type="entry name" value="ATPase_proteolipid_c-like_dom"/>
</dbReference>
<dbReference type="InterPro" id="IPR035921">
    <property type="entry name" value="F/V-ATP_Csub_sf"/>
</dbReference>
<dbReference type="PANTHER" id="PTHR10031">
    <property type="entry name" value="ATP SYNTHASE LIPID-BINDING PROTEIN, MITOCHONDRIAL"/>
    <property type="match status" value="1"/>
</dbReference>
<dbReference type="PANTHER" id="PTHR10031:SF0">
    <property type="entry name" value="ATPASE PROTEIN 9"/>
    <property type="match status" value="1"/>
</dbReference>
<dbReference type="Pfam" id="PF00137">
    <property type="entry name" value="ATP-synt_C"/>
    <property type="match status" value="1"/>
</dbReference>
<dbReference type="PRINTS" id="PR00124">
    <property type="entry name" value="ATPASEC"/>
</dbReference>
<dbReference type="SUPFAM" id="SSF81333">
    <property type="entry name" value="F1F0 ATP synthase subunit C"/>
    <property type="match status" value="1"/>
</dbReference>
<dbReference type="PROSITE" id="PS00605">
    <property type="entry name" value="ATPASE_C"/>
    <property type="match status" value="1"/>
</dbReference>
<organism>
    <name type="scientific">Rhizopus oryzae</name>
    <name type="common">Mucormycosis agent</name>
    <name type="synonym">Rhizopus arrhizus var. delemar</name>
    <dbReference type="NCBI Taxonomy" id="64495"/>
    <lineage>
        <taxon>Eukaryota</taxon>
        <taxon>Fungi</taxon>
        <taxon>Fungi incertae sedis</taxon>
        <taxon>Mucoromycota</taxon>
        <taxon>Mucoromycotina</taxon>
        <taxon>Mucoromycetes</taxon>
        <taxon>Mucorales</taxon>
        <taxon>Mucorineae</taxon>
        <taxon>Rhizopodaceae</taxon>
        <taxon>Rhizopus</taxon>
    </lineage>
</organism>
<protein>
    <recommendedName>
        <fullName evidence="2">ATP synthase subunit 9, mitochondrial</fullName>
    </recommendedName>
    <alternativeName>
        <fullName evidence="2">Lipid-binding protein</fullName>
    </alternativeName>
</protein>
<reference evidence="5" key="1">
    <citation type="journal article" date="2005" name="Nucleic Acids Res.">
        <title>Comparative mitochondrial genomics in zygomycetes: bacteria-like RNase P RNAs, mobile elements, and a close source of the group I intron invasion in angiosperms.</title>
        <authorList>
            <person name="Seif E."/>
            <person name="Leigh J."/>
            <person name="Liu Y."/>
            <person name="Roewer I."/>
            <person name="Forget L."/>
            <person name="Lang B.F."/>
        </authorList>
    </citation>
    <scope>NUCLEOTIDE SEQUENCE [GENOMIC DNA]</scope>
    <source>
        <strain evidence="5">DAOM 148428</strain>
    </source>
</reference>
<sequence>MVAAAKILGAGLATIGLAGAGVGVGLVFAALINSTSRNPSLRPQLFSYTILGFALTEAIGLFALMMAFLLLYAA</sequence>
<proteinExistence type="inferred from homology"/>
<accession>Q3T4E5</accession>
<feature type="chain" id="PRO_0000391439" description="ATP synthase subunit 9, mitochondrial">
    <location>
        <begin position="1"/>
        <end position="74"/>
    </location>
</feature>
<feature type="transmembrane region" description="Helical" evidence="3">
    <location>
        <begin position="12"/>
        <end position="32"/>
    </location>
</feature>
<feature type="transmembrane region" description="Helical" evidence="3">
    <location>
        <begin position="50"/>
        <end position="70"/>
    </location>
</feature>
<feature type="site" description="Reversibly protonated during proton transport" evidence="1">
    <location>
        <position position="57"/>
    </location>
</feature>
<keyword id="KW-0138">CF(0)</keyword>
<keyword id="KW-0375">Hydrogen ion transport</keyword>
<keyword id="KW-0406">Ion transport</keyword>
<keyword id="KW-0446">Lipid-binding</keyword>
<keyword id="KW-0472">Membrane</keyword>
<keyword id="KW-0496">Mitochondrion</keyword>
<keyword id="KW-0812">Transmembrane</keyword>
<keyword id="KW-1133">Transmembrane helix</keyword>
<keyword id="KW-0813">Transport</keyword>
<name>ATP9_RHIOR</name>
<evidence type="ECO:0000250" key="1">
    <source>
        <dbReference type="UniProtKB" id="P00845"/>
    </source>
</evidence>
<evidence type="ECO:0000250" key="2">
    <source>
        <dbReference type="UniProtKB" id="P61829"/>
    </source>
</evidence>
<evidence type="ECO:0000255" key="3"/>
<evidence type="ECO:0000305" key="4"/>
<evidence type="ECO:0000312" key="5">
    <source>
        <dbReference type="EMBL" id="AAW49478.1"/>
    </source>
</evidence>
<geneLocation type="mitochondrion" evidence="5"/>
<comment type="function">
    <text evidence="4">Mitochondrial membrane ATP synthase (F(1)F(0) ATP synthase or Complex V) produces ATP from ADP in the presence of a proton gradient across the membrane which is generated by electron transport complexes of the respiratory chain. F-type ATPases consist of two structural domains, F(1) - containing the extramembraneous catalytic core and F(0) - containing the membrane proton channel, linked together by a central stalk and a peripheral stalk. During catalysis, ATP synthesis in the catalytic domain of F(1) is coupled via a rotary mechanism of the central stalk subunits to proton translocation. Part of the complex F(0) domain. A homomeric c-ring of probably 10 subunits is part of the complex rotary element.</text>
</comment>
<comment type="subunit">
    <text evidence="4">F-type ATPases have 2 components, CF(1) - the catalytic core - and CF(0) - the membrane proton channel. CF(1) has five subunits: alpha(3), beta(3), gamma(1), delta(1), epsilon(1). CF(0) has three main subunits: a, b and c.</text>
</comment>
<comment type="subcellular location">
    <subcellularLocation>
        <location evidence="3">Mitochondrion membrane</location>
        <topology evidence="3">Multi-pass membrane protein</topology>
    </subcellularLocation>
</comment>
<comment type="similarity">
    <text evidence="3">Belongs to the ATPase C chain family.</text>
</comment>
<gene>
    <name evidence="5" type="primary">atp9</name>
</gene>